<keyword id="KW-0010">Activator</keyword>
<keyword id="KW-0963">Cytoplasm</keyword>
<keyword id="KW-0238">DNA-binding</keyword>
<keyword id="KW-0479">Metal-binding</keyword>
<keyword id="KW-0539">Nucleus</keyword>
<keyword id="KW-1185">Reference proteome</keyword>
<keyword id="KW-0677">Repeat</keyword>
<keyword id="KW-0678">Repressor</keyword>
<keyword id="KW-0804">Transcription</keyword>
<keyword id="KW-0805">Transcription regulation</keyword>
<keyword id="KW-0862">Zinc</keyword>
<keyword id="KW-0863">Zinc-finger</keyword>
<evidence type="ECO:0000250" key="1"/>
<evidence type="ECO:0000255" key="2">
    <source>
        <dbReference type="PROSITE-ProRule" id="PRU00042"/>
    </source>
</evidence>
<evidence type="ECO:0000256" key="3">
    <source>
        <dbReference type="SAM" id="MobiDB-lite"/>
    </source>
</evidence>
<evidence type="ECO:0000269" key="4">
    <source>
    </source>
</evidence>
<evidence type="ECO:0000269" key="5">
    <source>
    </source>
</evidence>
<evidence type="ECO:0000305" key="6"/>
<sequence length="585" mass="64326">MASYPYLAQSQPPQQQQQQQQQPQQQSQQLPTTAPSAAPQVNNTTANKPLYPASPNSPISPSDYSANMNVGGDSVDMLLSSVSAHHRSSDAGQSDMGSISPSTAHTTPDATTYKTSDEEDATGKITTPRSEGSPNTNGSGSDGENLVCKWGPCGKTFGSAEKLYAHLCDAHVGRKCTHNLSLVCNWDNCGIVTVKRDHITSHIRVHVPLKPYKCDFCTKSFKRPQDLKKHVKTHADDNEQAHNAYAKPHMQHTHQQQQQQQRYMQYPTYASGYEYPYYRYSQPQVQVPMVPSYAAVGHMPTPPMHPHAPIDRKRQWDTTSDFFDDIKRARVTPNYSSDIASRLSTIEQYIGIQGQQQQASPTPQTATTTSATPAPAAPHQATPPQQQLPSFKQGDYQETDQFLNQLGSNIYGNIKSVDPQYEAPAEFHLPHPMGYRYAFSHAPAPHGAAPVAPQVAPPAHPGVHGVSAPHYPDLSYSRSTVPQLSSRFEDVRQMSVGVTQRAARTTNVEESDDDDELVEGFGKMAIADSKAMQVAQMKKHLEVVSYLRRVLQEARETESGEAEDTAANKDTSASKSSLYPTIKAC</sequence>
<name>PACC_YARLI</name>
<protein>
    <recommendedName>
        <fullName>pH-response transcription factor pacC/RIM101</fullName>
    </recommendedName>
</protein>
<gene>
    <name type="primary">RIM101</name>
    <name type="synonym">RPH2</name>
    <name type="ordered locus">YALI0B13640g</name>
</gene>
<accession>P78978</accession>
<accession>Q6CER5</accession>
<dbReference type="EMBL" id="X99616">
    <property type="protein sequence ID" value="CAA67927.1"/>
    <property type="molecule type" value="Genomic_DNA"/>
</dbReference>
<dbReference type="EMBL" id="CR382128">
    <property type="protein sequence ID" value="CAG83098.1"/>
    <property type="molecule type" value="Genomic_DNA"/>
</dbReference>
<dbReference type="RefSeq" id="XP_500847.1">
    <property type="nucleotide sequence ID" value="XM_500847.1"/>
</dbReference>
<dbReference type="STRING" id="284591.P78978"/>
<dbReference type="EnsemblFungi" id="CAG83098">
    <property type="protein sequence ID" value="CAG83098"/>
    <property type="gene ID" value="YALI0_B13640g"/>
</dbReference>
<dbReference type="KEGG" id="yli:2907295"/>
<dbReference type="VEuPathDB" id="FungiDB:YALI0_B13640g"/>
<dbReference type="HOGENOM" id="CLU_466307_0_0_1"/>
<dbReference type="InParanoid" id="P78978"/>
<dbReference type="OrthoDB" id="99538at4891"/>
<dbReference type="Proteomes" id="UP000001300">
    <property type="component" value="Chromosome B"/>
</dbReference>
<dbReference type="GO" id="GO:0005737">
    <property type="term" value="C:cytoplasm"/>
    <property type="evidence" value="ECO:0007669"/>
    <property type="project" value="UniProtKB-SubCell"/>
</dbReference>
<dbReference type="GO" id="GO:0005634">
    <property type="term" value="C:nucleus"/>
    <property type="evidence" value="ECO:0000318"/>
    <property type="project" value="GO_Central"/>
</dbReference>
<dbReference type="GO" id="GO:0003677">
    <property type="term" value="F:DNA binding"/>
    <property type="evidence" value="ECO:0007669"/>
    <property type="project" value="UniProtKB-KW"/>
</dbReference>
<dbReference type="GO" id="GO:0008270">
    <property type="term" value="F:zinc ion binding"/>
    <property type="evidence" value="ECO:0007669"/>
    <property type="project" value="UniProtKB-KW"/>
</dbReference>
<dbReference type="GO" id="GO:0045944">
    <property type="term" value="P:positive regulation of transcription by RNA polymerase II"/>
    <property type="evidence" value="ECO:0000318"/>
    <property type="project" value="GO_Central"/>
</dbReference>
<dbReference type="FunFam" id="3.30.160.60:FF:002343">
    <property type="entry name" value="Zinc finger protein 33A"/>
    <property type="match status" value="1"/>
</dbReference>
<dbReference type="Gene3D" id="3.30.160.60">
    <property type="entry name" value="Classic Zinc Finger"/>
    <property type="match status" value="2"/>
</dbReference>
<dbReference type="InterPro" id="IPR050806">
    <property type="entry name" value="pacC/RIM101"/>
</dbReference>
<dbReference type="InterPro" id="IPR036236">
    <property type="entry name" value="Znf_C2H2_sf"/>
</dbReference>
<dbReference type="InterPro" id="IPR013087">
    <property type="entry name" value="Znf_C2H2_type"/>
</dbReference>
<dbReference type="PANTHER" id="PTHR47257">
    <property type="entry name" value="PH-RESPONSE TRANSCRIPTION FACTOR PACC/RIM101"/>
    <property type="match status" value="1"/>
</dbReference>
<dbReference type="PANTHER" id="PTHR47257:SF1">
    <property type="entry name" value="PH-RESPONSE TRANSCRIPTION FACTOR PACC_RIM101"/>
    <property type="match status" value="1"/>
</dbReference>
<dbReference type="Pfam" id="PF00096">
    <property type="entry name" value="zf-C2H2"/>
    <property type="match status" value="1"/>
</dbReference>
<dbReference type="SMART" id="SM00355">
    <property type="entry name" value="ZnF_C2H2"/>
    <property type="match status" value="3"/>
</dbReference>
<dbReference type="SUPFAM" id="SSF57667">
    <property type="entry name" value="beta-beta-alpha zinc fingers"/>
    <property type="match status" value="2"/>
</dbReference>
<dbReference type="PROSITE" id="PS00028">
    <property type="entry name" value="ZINC_FINGER_C2H2_1"/>
    <property type="match status" value="2"/>
</dbReference>
<dbReference type="PROSITE" id="PS50157">
    <property type="entry name" value="ZINC_FINGER_C2H2_2"/>
    <property type="match status" value="3"/>
</dbReference>
<feature type="chain" id="PRO_0000046846" description="pH-response transcription factor pacC/RIM101">
    <location>
        <begin position="1"/>
        <end position="585"/>
    </location>
</feature>
<feature type="zinc finger region" description="C2H2-type 1" evidence="2">
    <location>
        <begin position="146"/>
        <end position="171"/>
    </location>
</feature>
<feature type="zinc finger region" description="C2H2-type 2" evidence="2">
    <location>
        <begin position="182"/>
        <end position="206"/>
    </location>
</feature>
<feature type="zinc finger region" description="C2H2-type 3" evidence="2">
    <location>
        <begin position="212"/>
        <end position="234"/>
    </location>
</feature>
<feature type="region of interest" description="Disordered" evidence="3">
    <location>
        <begin position="1"/>
        <end position="68"/>
    </location>
</feature>
<feature type="region of interest" description="Disordered" evidence="3">
    <location>
        <begin position="84"/>
        <end position="142"/>
    </location>
</feature>
<feature type="region of interest" description="Disordered" evidence="3">
    <location>
        <begin position="353"/>
        <end position="391"/>
    </location>
</feature>
<feature type="region of interest" description="Disordered" evidence="3">
    <location>
        <begin position="555"/>
        <end position="585"/>
    </location>
</feature>
<feature type="short sequence motif" description="YPX[LI] motif 1">
    <location>
        <begin position="471"/>
        <end position="474"/>
    </location>
</feature>
<feature type="short sequence motif" description="YPX[LI] motif 2">
    <location>
        <begin position="579"/>
        <end position="582"/>
    </location>
</feature>
<feature type="compositionally biased region" description="Low complexity" evidence="3">
    <location>
        <begin position="9"/>
        <end position="29"/>
    </location>
</feature>
<feature type="compositionally biased region" description="Polar residues" evidence="3">
    <location>
        <begin position="30"/>
        <end position="47"/>
    </location>
</feature>
<feature type="compositionally biased region" description="Polar residues" evidence="3">
    <location>
        <begin position="54"/>
        <end position="68"/>
    </location>
</feature>
<feature type="compositionally biased region" description="Polar residues" evidence="3">
    <location>
        <begin position="90"/>
        <end position="114"/>
    </location>
</feature>
<feature type="compositionally biased region" description="Polar residues" evidence="3">
    <location>
        <begin position="124"/>
        <end position="139"/>
    </location>
</feature>
<feature type="compositionally biased region" description="Low complexity" evidence="3">
    <location>
        <begin position="355"/>
        <end position="387"/>
    </location>
</feature>
<feature type="compositionally biased region" description="Polar residues" evidence="3">
    <location>
        <begin position="568"/>
        <end position="579"/>
    </location>
</feature>
<feature type="mutagenesis site" description="In RIM101-1119; dominant active allele that activates XPR2 transcription independent on ambient pH." evidence="5">
    <location>
        <begin position="331"/>
        <end position="585"/>
    </location>
</feature>
<feature type="mutagenesis site" description="In RIM101-5; dominant active allele that activates XPR2 transcription independent on ambient pH." evidence="5">
    <location>
        <begin position="420"/>
        <end position="585"/>
    </location>
</feature>
<feature type="mutagenesis site" description="In RIM101-1116; dominant active allele that activates XPR2 transcription independent on ambient pH." evidence="5">
    <location>
        <begin position="474"/>
        <end position="585"/>
    </location>
</feature>
<comment type="function">
    <text evidence="4 5">Transcription factor that mediates regulation of both acid- and alkaline-expressed genes in response to ambient pH. At alkaline ambient pH, activates transcription of alkaline-expressed genes (including RIM101 itself) and represses transcription of acid-expressed genes, thereby regulating the synthesis and secretion of alkaline protease XPR2 and acidic protease AXP1 depending on ambient pH. Specifically recognizes and binds the consensus sequence 5'-GCCARG-3'. Required for mating and sporulation.</text>
</comment>
<comment type="subunit">
    <text evidence="1">Binds to DNA. Interacts with RIM20, which binds to the two YPX[LI] motifs and is required for proteolytic processing (By similarity).</text>
</comment>
<comment type="subcellular location">
    <subcellularLocation>
        <location evidence="1">Cytoplasm</location>
    </subcellularLocation>
    <subcellularLocation>
        <location evidence="1">Nucleus</location>
    </subcellularLocation>
</comment>
<comment type="PTM">
    <text evidence="1">Activated by C-terminal proteolytic cleavage by signaling protease (probably palB/RIM13) at neutral to alkaline ambient pH.</text>
</comment>
<comment type="similarity">
    <text evidence="6">Belongs to the pacC/RIM101 family.</text>
</comment>
<proteinExistence type="evidence at protein level"/>
<reference key="1">
    <citation type="journal article" date="1997" name="Mol. Cell. Biol.">
        <title>Genetic analysis of regulatory mutants affecting synthesis of extracellular proteinases in the yeast Yarrowia lipolytica: identification of a RIM101/pacC homolog.</title>
        <authorList>
            <person name="Lambert M."/>
            <person name="Blanchin-Roland S."/>
            <person name="Le Louedec F."/>
            <person name="Lepingle A."/>
            <person name="Gaillardin C."/>
        </authorList>
    </citation>
    <scope>NUCLEOTIDE SEQUENCE [GENOMIC DNA]</scope>
    <scope>FUNCTION</scope>
    <scope>MUTAGENESIS OF 331-VAL--CYS-585; 420-GLN--CYS-585 AND 474-LEU--CYS-585</scope>
</reference>
<reference key="2">
    <citation type="journal article" date="2004" name="Nature">
        <title>Genome evolution in yeasts.</title>
        <authorList>
            <person name="Dujon B."/>
            <person name="Sherman D."/>
            <person name="Fischer G."/>
            <person name="Durrens P."/>
            <person name="Casaregola S."/>
            <person name="Lafontaine I."/>
            <person name="de Montigny J."/>
            <person name="Marck C."/>
            <person name="Neuveglise C."/>
            <person name="Talla E."/>
            <person name="Goffard N."/>
            <person name="Frangeul L."/>
            <person name="Aigle M."/>
            <person name="Anthouard V."/>
            <person name="Babour A."/>
            <person name="Barbe V."/>
            <person name="Barnay S."/>
            <person name="Blanchin S."/>
            <person name="Beckerich J.-M."/>
            <person name="Beyne E."/>
            <person name="Bleykasten C."/>
            <person name="Boisrame A."/>
            <person name="Boyer J."/>
            <person name="Cattolico L."/>
            <person name="Confanioleri F."/>
            <person name="de Daruvar A."/>
            <person name="Despons L."/>
            <person name="Fabre E."/>
            <person name="Fairhead C."/>
            <person name="Ferry-Dumazet H."/>
            <person name="Groppi A."/>
            <person name="Hantraye F."/>
            <person name="Hennequin C."/>
            <person name="Jauniaux N."/>
            <person name="Joyet P."/>
            <person name="Kachouri R."/>
            <person name="Kerrest A."/>
            <person name="Koszul R."/>
            <person name="Lemaire M."/>
            <person name="Lesur I."/>
            <person name="Ma L."/>
            <person name="Muller H."/>
            <person name="Nicaud J.-M."/>
            <person name="Nikolski M."/>
            <person name="Oztas S."/>
            <person name="Ozier-Kalogeropoulos O."/>
            <person name="Pellenz S."/>
            <person name="Potier S."/>
            <person name="Richard G.-F."/>
            <person name="Straub M.-L."/>
            <person name="Suleau A."/>
            <person name="Swennen D."/>
            <person name="Tekaia F."/>
            <person name="Wesolowski-Louvel M."/>
            <person name="Westhof E."/>
            <person name="Wirth B."/>
            <person name="Zeniou-Meyer M."/>
            <person name="Zivanovic Y."/>
            <person name="Bolotin-Fukuhara M."/>
            <person name="Thierry A."/>
            <person name="Bouchier C."/>
            <person name="Caudron B."/>
            <person name="Scarpelli C."/>
            <person name="Gaillardin C."/>
            <person name="Weissenbach J."/>
            <person name="Wincker P."/>
            <person name="Souciet J.-L."/>
        </authorList>
    </citation>
    <scope>NUCLEOTIDE SEQUENCE [LARGE SCALE GENOMIC DNA]</scope>
    <source>
        <strain>CLIB 122 / E 150</strain>
    </source>
</reference>
<reference key="3">
    <citation type="journal article" date="1999" name="Microbiology">
        <title>Functional analysis of upstream regulating regions from the Yarrowia lipolytica XPR2 promoter.</title>
        <authorList>
            <person name="Madzak C."/>
            <person name="Blanchin-Roland S."/>
            <person name="Cordero-Otero R.R."/>
            <person name="Gaillardin C."/>
        </authorList>
    </citation>
    <scope>DNA-BINDING</scope>
</reference>
<reference key="4">
    <citation type="journal article" date="2002" name="Genetics">
        <title>Genetic control of extracellular protease synthesis in the yeast Yarrowia lipolytica.</title>
        <authorList>
            <person name="Gonzalez-Lopez C.I."/>
            <person name="Szabo R."/>
            <person name="Blanchin-Roland S."/>
            <person name="Gaillardin C."/>
        </authorList>
    </citation>
    <scope>FUNCTION</scope>
</reference>
<organism>
    <name type="scientific">Yarrowia lipolytica (strain CLIB 122 / E 150)</name>
    <name type="common">Yeast</name>
    <name type="synonym">Candida lipolytica</name>
    <dbReference type="NCBI Taxonomy" id="284591"/>
    <lineage>
        <taxon>Eukaryota</taxon>
        <taxon>Fungi</taxon>
        <taxon>Dikarya</taxon>
        <taxon>Ascomycota</taxon>
        <taxon>Saccharomycotina</taxon>
        <taxon>Dipodascomycetes</taxon>
        <taxon>Dipodascales</taxon>
        <taxon>Dipodascales incertae sedis</taxon>
        <taxon>Yarrowia</taxon>
    </lineage>
</organism>